<sequence length="455" mass="51128">MLKTILPTIMLIPLAWLTSNNMVWINTTLYSFAISLTSLHLLHQPLDNSLNLSPEFFLDSLSTPLLILTIWLLPLMLIASQSHLSSGSTFQKKSYITTIILLQVSLIMTFAATDLILLYIMFETTLIPTMIIITRWGNQLERLNAGSYFLFYTLVGSLPLLVTLMLIQNTLGSLNLMMLPYLAKSINNLWSTNMLWLTCIMAFMVKMPLYGLHLWLPKAHVEAPIAGSMVLAAILLKLGGYGMLRITILLDPLTTHMYYPFLMLSLWGMVMTSSICLRQTDMKSLIAYSSVSHMALVIIAIMLQTPWSFMGALALMIAHGLTSSMLFCLANSNYERIHSRTMILARGLQTLLPLMATWWLLASLINMAPPPTINLIGELLIITTSFSWSNLTIFPMGLNVLITTMYTLHMMTTTQRGKTSHHAKSIKPSFTRENTLMTLHLLPLLLLSLNPNIIL</sequence>
<accession>Q38PR3</accession>
<accession>Q2I3H8</accession>
<organism>
    <name type="scientific">Mammuthus primigenius</name>
    <name type="common">Siberian woolly mammoth</name>
    <dbReference type="NCBI Taxonomy" id="37349"/>
    <lineage>
        <taxon>Eukaryota</taxon>
        <taxon>Metazoa</taxon>
        <taxon>Chordata</taxon>
        <taxon>Craniata</taxon>
        <taxon>Vertebrata</taxon>
        <taxon>Euteleostomi</taxon>
        <taxon>Mammalia</taxon>
        <taxon>Eutheria</taxon>
        <taxon>Afrotheria</taxon>
        <taxon>Proboscidea</taxon>
        <taxon>Elephantidae</taxon>
        <taxon>Mammuthus</taxon>
    </lineage>
</organism>
<protein>
    <recommendedName>
        <fullName>NADH-ubiquinone oxidoreductase chain 4</fullName>
        <ecNumber evidence="1">7.1.1.2</ecNumber>
    </recommendedName>
    <alternativeName>
        <fullName>NADH dehydrogenase subunit 4</fullName>
    </alternativeName>
</protein>
<keyword id="KW-0249">Electron transport</keyword>
<keyword id="KW-0952">Extinct organism protein</keyword>
<keyword id="KW-0472">Membrane</keyword>
<keyword id="KW-0496">Mitochondrion</keyword>
<keyword id="KW-0999">Mitochondrion inner membrane</keyword>
<keyword id="KW-0520">NAD</keyword>
<keyword id="KW-0679">Respiratory chain</keyword>
<keyword id="KW-1278">Translocase</keyword>
<keyword id="KW-0812">Transmembrane</keyword>
<keyword id="KW-1133">Transmembrane helix</keyword>
<keyword id="KW-0813">Transport</keyword>
<keyword id="KW-0830">Ubiquinone</keyword>
<gene>
    <name type="primary">MT-ND4</name>
    <name type="synonym">MTND4</name>
    <name type="synonym">NADH4</name>
    <name type="synonym">ND4</name>
</gene>
<proteinExistence type="inferred from homology"/>
<name>NU4M_MAMPR</name>
<feature type="chain" id="PRO_0000232853" description="NADH-ubiquinone oxidoreductase chain 4">
    <location>
        <begin position="1"/>
        <end position="455"/>
    </location>
</feature>
<feature type="transmembrane region" description="Helical" evidence="3">
    <location>
        <begin position="21"/>
        <end position="43"/>
    </location>
</feature>
<feature type="transmembrane region" description="Helical" evidence="3">
    <location>
        <begin position="60"/>
        <end position="80"/>
    </location>
</feature>
<feature type="transmembrane region" description="Helical" evidence="3">
    <location>
        <begin position="99"/>
        <end position="119"/>
    </location>
</feature>
<feature type="transmembrane region" description="Helical" evidence="3">
    <location>
        <begin position="147"/>
        <end position="167"/>
    </location>
</feature>
<feature type="transmembrane region" description="Helical" evidence="3">
    <location>
        <begin position="195"/>
        <end position="215"/>
    </location>
</feature>
<feature type="transmembrane region" description="Helical" evidence="3">
    <location>
        <begin position="224"/>
        <end position="244"/>
    </location>
</feature>
<feature type="transmembrane region" description="Helical" evidence="3">
    <location>
        <begin position="257"/>
        <end position="277"/>
    </location>
</feature>
<feature type="transmembrane region" description="Helical" evidence="3">
    <location>
        <begin position="284"/>
        <end position="303"/>
    </location>
</feature>
<feature type="transmembrane region" description="Helical" evidence="3">
    <location>
        <begin position="308"/>
        <end position="330"/>
    </location>
</feature>
<feature type="transmembrane region" description="Helical" evidence="3">
    <location>
        <begin position="351"/>
        <end position="371"/>
    </location>
</feature>
<feature type="transmembrane region" description="Helical" evidence="3">
    <location>
        <begin position="375"/>
        <end position="395"/>
    </location>
</feature>
<feature type="sequence conflict" description="In Ref. 2; ABC17887." evidence="4" ref="2">
    <original>T</original>
    <variation>A</variation>
    <location>
        <position position="438"/>
    </location>
</feature>
<comment type="function">
    <text evidence="1">Core subunit of the mitochondrial membrane respiratory chain NADH dehydrogenase (Complex I) which catalyzes electron transfer from NADH through the respiratory chain, using ubiquinone as an electron acceptor. Essential for the catalytic activity and assembly of complex I.</text>
</comment>
<comment type="catalytic activity">
    <reaction evidence="1">
        <text>a ubiquinone + NADH + 5 H(+)(in) = a ubiquinol + NAD(+) + 4 H(+)(out)</text>
        <dbReference type="Rhea" id="RHEA:29091"/>
        <dbReference type="Rhea" id="RHEA-COMP:9565"/>
        <dbReference type="Rhea" id="RHEA-COMP:9566"/>
        <dbReference type="ChEBI" id="CHEBI:15378"/>
        <dbReference type="ChEBI" id="CHEBI:16389"/>
        <dbReference type="ChEBI" id="CHEBI:17976"/>
        <dbReference type="ChEBI" id="CHEBI:57540"/>
        <dbReference type="ChEBI" id="CHEBI:57945"/>
        <dbReference type="EC" id="7.1.1.2"/>
    </reaction>
</comment>
<comment type="subunit">
    <text evidence="2">Core subunit of respiratory chain NADH dehydrogenase (Complex I) which is composed of 45 different subunits.</text>
</comment>
<comment type="subcellular location">
    <subcellularLocation>
        <location evidence="2">Mitochondrion inner membrane</location>
        <topology evidence="3">Multi-pass membrane protein</topology>
    </subcellularLocation>
</comment>
<comment type="similarity">
    <text evidence="4">Belongs to the complex I subunit 4 family.</text>
</comment>
<reference key="1">
    <citation type="journal article" date="2006" name="Nature">
        <title>Multiplex amplification of the mammoth mitochondrial genome and the evolution of Elephantidae.</title>
        <authorList>
            <person name="Krause J."/>
            <person name="Dear P.H."/>
            <person name="Pollack J.L."/>
            <person name="Slatkin M."/>
            <person name="Spriggs H."/>
            <person name="Barnes I."/>
            <person name="Lister A.M."/>
            <person name="Ebersberger I."/>
            <person name="Paeaebo S."/>
            <person name="Hofreiter M."/>
        </authorList>
    </citation>
    <scope>NUCLEOTIDE SEQUENCE [GENOMIC DNA]</scope>
</reference>
<reference key="2">
    <citation type="journal article" date="2006" name="PLoS Biol.">
        <title>Complete mitochondrial genome and phylogeny of Pleistocene mammoth Mammuthus primigenius.</title>
        <authorList>
            <person name="Rogaev E.I."/>
            <person name="Moliaka Y.K."/>
            <person name="Malyarchuk B.A."/>
            <person name="Kondrashov F.A."/>
            <person name="Derenko M.V."/>
            <person name="Chumakov I."/>
            <person name="Grigorenko A.P."/>
        </authorList>
    </citation>
    <scope>NUCLEOTIDE SEQUENCE [GENOMIC DNA]</scope>
    <source>
        <tissue>Muscle</tissue>
    </source>
</reference>
<evidence type="ECO:0000250" key="1">
    <source>
        <dbReference type="UniProtKB" id="P03905"/>
    </source>
</evidence>
<evidence type="ECO:0000250" key="2">
    <source>
        <dbReference type="UniProtKB" id="P03910"/>
    </source>
</evidence>
<evidence type="ECO:0000255" key="3"/>
<evidence type="ECO:0000305" key="4"/>
<dbReference type="EC" id="7.1.1.2" evidence="1"/>
<dbReference type="EMBL" id="DQ188829">
    <property type="protein sequence ID" value="ABA29793.1"/>
    <property type="molecule type" value="Genomic_DNA"/>
</dbReference>
<dbReference type="EMBL" id="DQ316067">
    <property type="protein sequence ID" value="ABC17887.1"/>
    <property type="molecule type" value="Genomic_DNA"/>
</dbReference>
<dbReference type="RefSeq" id="YP_398763.1">
    <property type="nucleotide sequence ID" value="NC_007596.2"/>
</dbReference>
<dbReference type="SMR" id="Q38PR3"/>
<dbReference type="GeneID" id="3773150"/>
<dbReference type="CTD" id="4538"/>
<dbReference type="GO" id="GO:0005743">
    <property type="term" value="C:mitochondrial inner membrane"/>
    <property type="evidence" value="ECO:0000250"/>
    <property type="project" value="UniProtKB"/>
</dbReference>
<dbReference type="GO" id="GO:0008137">
    <property type="term" value="F:NADH dehydrogenase (ubiquinone) activity"/>
    <property type="evidence" value="ECO:0000250"/>
    <property type="project" value="UniProtKB"/>
</dbReference>
<dbReference type="GO" id="GO:0048039">
    <property type="term" value="F:ubiquinone binding"/>
    <property type="evidence" value="ECO:0007669"/>
    <property type="project" value="TreeGrafter"/>
</dbReference>
<dbReference type="GO" id="GO:0015990">
    <property type="term" value="P:electron transport coupled proton transport"/>
    <property type="evidence" value="ECO:0007669"/>
    <property type="project" value="TreeGrafter"/>
</dbReference>
<dbReference type="GO" id="GO:0006120">
    <property type="term" value="P:mitochondrial electron transport, NADH to ubiquinone"/>
    <property type="evidence" value="ECO:0000250"/>
    <property type="project" value="UniProtKB"/>
</dbReference>
<dbReference type="GO" id="GO:0032981">
    <property type="term" value="P:mitochondrial respiratory chain complex I assembly"/>
    <property type="evidence" value="ECO:0000250"/>
    <property type="project" value="UniProtKB"/>
</dbReference>
<dbReference type="InterPro" id="IPR000260">
    <property type="entry name" value="NADH4_N"/>
</dbReference>
<dbReference type="InterPro" id="IPR010227">
    <property type="entry name" value="NADH_Q_OxRdtase_chainM/4"/>
</dbReference>
<dbReference type="InterPro" id="IPR003918">
    <property type="entry name" value="NADH_UbQ_OxRdtase"/>
</dbReference>
<dbReference type="InterPro" id="IPR001750">
    <property type="entry name" value="ND/Mrp_TM"/>
</dbReference>
<dbReference type="NCBIfam" id="TIGR01972">
    <property type="entry name" value="NDH_I_M"/>
    <property type="match status" value="1"/>
</dbReference>
<dbReference type="PANTHER" id="PTHR43507">
    <property type="entry name" value="NADH-UBIQUINONE OXIDOREDUCTASE CHAIN 4"/>
    <property type="match status" value="1"/>
</dbReference>
<dbReference type="PANTHER" id="PTHR43507:SF20">
    <property type="entry name" value="NADH-UBIQUINONE OXIDOREDUCTASE CHAIN 4"/>
    <property type="match status" value="1"/>
</dbReference>
<dbReference type="Pfam" id="PF01059">
    <property type="entry name" value="Oxidored_q5_N"/>
    <property type="match status" value="1"/>
</dbReference>
<dbReference type="Pfam" id="PF00361">
    <property type="entry name" value="Proton_antipo_M"/>
    <property type="match status" value="1"/>
</dbReference>
<dbReference type="PRINTS" id="PR01437">
    <property type="entry name" value="NUOXDRDTASE4"/>
</dbReference>
<geneLocation type="mitochondrion"/>